<name>VP5_EHDV1</name>
<reference key="1">
    <citation type="journal article" date="1991" name="Virus Res.">
        <title>Complete nucleotide sequence of segment 5 of epizootic haemorrhagic disease virus; the outer capsid protein VP5 is homologous to the VP5 protein of bluetongue virus.</title>
        <authorList>
            <person name="Iwata H."/>
            <person name="Hirasawa T."/>
            <person name="Roy P."/>
        </authorList>
    </citation>
    <scope>NUCLEOTIDE SEQUENCE [GENOMIC RNA]</scope>
</reference>
<organismHost>
    <name type="scientific">Antilocapra americana</name>
    <name type="common">Pronghorn</name>
    <dbReference type="NCBI Taxonomy" id="9891"/>
</organismHost>
<organismHost>
    <name type="scientific">Odocoileus hemionus</name>
    <name type="common">Mule deer</name>
    <name type="synonym">Cervus hemionus</name>
    <dbReference type="NCBI Taxonomy" id="9872"/>
</organismHost>
<organismHost>
    <name type="scientific">Odocoileus virginianus</name>
    <name type="common">White-tailed deer</name>
    <dbReference type="NCBI Taxonomy" id="9874"/>
</organismHost>
<keyword id="KW-0167">Capsid protein</keyword>
<keyword id="KW-1152">Outer capsid protein</keyword>
<keyword id="KW-1162">Viral penetration into host cytoplasm</keyword>
<keyword id="KW-1173">Viral penetration via permeabilization of host membrane</keyword>
<keyword id="KW-0946">Virion</keyword>
<keyword id="KW-1160">Virus entry into host cell</keyword>
<organism>
    <name type="scientific">Epizootic hemorrhagic disease virus 1</name>
    <name type="common">EHDV-1</name>
    <dbReference type="NCBI Taxonomy" id="33720"/>
    <lineage>
        <taxon>Viruses</taxon>
        <taxon>Riboviria</taxon>
        <taxon>Orthornavirae</taxon>
        <taxon>Duplornaviricota</taxon>
        <taxon>Resentoviricetes</taxon>
        <taxon>Reovirales</taxon>
        <taxon>Sedoreoviridae</taxon>
        <taxon>Orbivirus</taxon>
        <taxon>Epizootic hemorrhagic disease virus</taxon>
    </lineage>
</organism>
<feature type="chain" id="PRO_0000222719" description="Outer capsid protein VP5">
    <location>
        <begin position="1"/>
        <end position="527"/>
    </location>
</feature>
<feature type="region of interest" description="Involved in membrane permeabilization" evidence="1">
    <location>
        <begin position="1"/>
        <end position="42"/>
    </location>
</feature>
<accession>Q01175</accession>
<proteinExistence type="inferred from homology"/>
<protein>
    <recommendedName>
        <fullName>Outer capsid protein VP5</fullName>
    </recommendedName>
</protein>
<gene>
    <name type="primary">Segment-6</name>
</gene>
<comment type="function">
    <text evidence="1">VP5 protein is one of the two proteins (with VP2) which constitute the virus particle outer capsid. Acts as a membrane permeabilization protein that mediates release of viral particles from endosomal compartments into the cytoplasm. Permeabilization activity is probably negatively regulated by VP2 and is triggered by endosomal degradation of VP2 and exposure to low pH (By similarity).</text>
</comment>
<comment type="subcellular location">
    <subcellularLocation>
        <location evidence="2">Virion</location>
    </subcellularLocation>
</comment>
<comment type="similarity">
    <text evidence="2">Belongs to the orbivirus VP5 family.</text>
</comment>
<sequence>MGKFIKQLSKFGKKVGGALTSNTAKKIYKTIGDTAVRFAESDIGSAAIDGLIQGSVESVLTGESYGETVKRAVLLNVLGAGDEIPDPLSPGEQGIQRKIKELEDEMKGEVVRTKHNEQIIRRFGADLDEVYKFAVSEYKEGVEEKDQFEILKKALTSYGELTKAEFGELKRLEKALQKESSERSKDESMMVKEYRQKIEALKDAIEVESTGIQEEAIQEIAGMSADILESAAEEVPLFGGGVATSIATARAIEGGYKLKKVINALSGIDLSHLRTPKIQPKTLEAILEAPTKEEIKDLSLVEGIQMKLQNLEENRNEVLHIQEEILPKLREAMIEDHKEIGDERDKRILPKTAMRFKVPTTQQPVIQIYSAPWDSDDVFMFHCISHHHLNESSFLGFDLELEYVHYEDLTRHWHALGAAQEVTGRSLKEAYSEFFQLAAQIDGAGAIHQKRLIRSKSYHPIYLGAMHYDIAYRELKNNALKIVNDSEVQKHLLRGPKHFQRRAILSALKDGVKLLGGVDLAEFMRYA</sequence>
<dbReference type="EMBL" id="X55782">
    <property type="protein sequence ID" value="CAA39303.1"/>
    <property type="molecule type" value="Genomic_RNA"/>
</dbReference>
<dbReference type="PIR" id="S18762">
    <property type="entry name" value="S18762"/>
</dbReference>
<dbReference type="SMR" id="Q01175"/>
<dbReference type="GO" id="GO:0039624">
    <property type="term" value="C:viral outer capsid"/>
    <property type="evidence" value="ECO:0007669"/>
    <property type="project" value="UniProtKB-KW"/>
</dbReference>
<dbReference type="GO" id="GO:0005198">
    <property type="term" value="F:structural molecule activity"/>
    <property type="evidence" value="ECO:0007669"/>
    <property type="project" value="InterPro"/>
</dbReference>
<dbReference type="GO" id="GO:0140267">
    <property type="term" value="P:symbiont entry into host cell via permeabilization of host membrane"/>
    <property type="evidence" value="ECO:0007669"/>
    <property type="project" value="UniProtKB-KW"/>
</dbReference>
<dbReference type="InterPro" id="IPR000145">
    <property type="entry name" value="Capsid_VP5_Orbivir"/>
</dbReference>
<dbReference type="Pfam" id="PF00901">
    <property type="entry name" value="Orbi_VP5"/>
    <property type="match status" value="1"/>
</dbReference>
<evidence type="ECO:0000250" key="1"/>
<evidence type="ECO:0000305" key="2"/>